<protein>
    <recommendedName>
        <fullName evidence="1">Glutamate-1-semialdehyde 2,1-aminomutase 1</fullName>
        <shortName evidence="1">GSA 1</shortName>
        <ecNumber evidence="1">5.4.3.8</ecNumber>
    </recommendedName>
    <alternativeName>
        <fullName evidence="1">Glutamate-1-semialdehyde aminotransferase 1</fullName>
        <shortName evidence="1">GSA-AT 1</shortName>
    </alternativeName>
</protein>
<reference key="1">
    <citation type="journal article" date="2002" name="Lancet">
        <title>Genome and virulence determinants of high virulence community-acquired MRSA.</title>
        <authorList>
            <person name="Baba T."/>
            <person name="Takeuchi F."/>
            <person name="Kuroda M."/>
            <person name="Yuzawa H."/>
            <person name="Aoki K."/>
            <person name="Oguchi A."/>
            <person name="Nagai Y."/>
            <person name="Iwama N."/>
            <person name="Asano K."/>
            <person name="Naimi T."/>
            <person name="Kuroda H."/>
            <person name="Cui L."/>
            <person name="Yamamoto K."/>
            <person name="Hiramatsu K."/>
        </authorList>
    </citation>
    <scope>NUCLEOTIDE SEQUENCE [LARGE SCALE GENOMIC DNA]</scope>
    <source>
        <strain>MW2</strain>
    </source>
</reference>
<dbReference type="EC" id="5.4.3.8" evidence="1"/>
<dbReference type="EMBL" id="BA000033">
    <property type="protein sequence ID" value="BAB95476.1"/>
    <property type="molecule type" value="Genomic_DNA"/>
</dbReference>
<dbReference type="SMR" id="Q8NW75"/>
<dbReference type="KEGG" id="sam:MW1611"/>
<dbReference type="HOGENOM" id="CLU_016922_1_5_9"/>
<dbReference type="UniPathway" id="UPA00251">
    <property type="reaction ID" value="UER00317"/>
</dbReference>
<dbReference type="GO" id="GO:0005737">
    <property type="term" value="C:cytoplasm"/>
    <property type="evidence" value="ECO:0007669"/>
    <property type="project" value="UniProtKB-SubCell"/>
</dbReference>
<dbReference type="GO" id="GO:0042286">
    <property type="term" value="F:glutamate-1-semialdehyde 2,1-aminomutase activity"/>
    <property type="evidence" value="ECO:0007669"/>
    <property type="project" value="UniProtKB-UniRule"/>
</dbReference>
<dbReference type="GO" id="GO:0030170">
    <property type="term" value="F:pyridoxal phosphate binding"/>
    <property type="evidence" value="ECO:0007669"/>
    <property type="project" value="InterPro"/>
</dbReference>
<dbReference type="GO" id="GO:0008483">
    <property type="term" value="F:transaminase activity"/>
    <property type="evidence" value="ECO:0007669"/>
    <property type="project" value="InterPro"/>
</dbReference>
<dbReference type="GO" id="GO:0006782">
    <property type="term" value="P:protoporphyrinogen IX biosynthetic process"/>
    <property type="evidence" value="ECO:0007669"/>
    <property type="project" value="UniProtKB-UniRule"/>
</dbReference>
<dbReference type="CDD" id="cd00610">
    <property type="entry name" value="OAT_like"/>
    <property type="match status" value="1"/>
</dbReference>
<dbReference type="FunFam" id="3.40.640.10:FF:000021">
    <property type="entry name" value="Glutamate-1-semialdehyde 2,1-aminomutase"/>
    <property type="match status" value="1"/>
</dbReference>
<dbReference type="Gene3D" id="3.90.1150.10">
    <property type="entry name" value="Aspartate Aminotransferase, domain 1"/>
    <property type="match status" value="1"/>
</dbReference>
<dbReference type="Gene3D" id="3.40.640.10">
    <property type="entry name" value="Type I PLP-dependent aspartate aminotransferase-like (Major domain)"/>
    <property type="match status" value="1"/>
</dbReference>
<dbReference type="HAMAP" id="MF_00375">
    <property type="entry name" value="HemL_aminotrans_3"/>
    <property type="match status" value="1"/>
</dbReference>
<dbReference type="InterPro" id="IPR004639">
    <property type="entry name" value="4pyrrol_synth_GluAld_NH2Trfase"/>
</dbReference>
<dbReference type="InterPro" id="IPR005814">
    <property type="entry name" value="Aminotrans_3"/>
</dbReference>
<dbReference type="InterPro" id="IPR049704">
    <property type="entry name" value="Aminotrans_3_PPA_site"/>
</dbReference>
<dbReference type="InterPro" id="IPR015424">
    <property type="entry name" value="PyrdxlP-dep_Trfase"/>
</dbReference>
<dbReference type="InterPro" id="IPR015421">
    <property type="entry name" value="PyrdxlP-dep_Trfase_major"/>
</dbReference>
<dbReference type="InterPro" id="IPR015422">
    <property type="entry name" value="PyrdxlP-dep_Trfase_small"/>
</dbReference>
<dbReference type="NCBIfam" id="TIGR00713">
    <property type="entry name" value="hemL"/>
    <property type="match status" value="1"/>
</dbReference>
<dbReference type="NCBIfam" id="NF000818">
    <property type="entry name" value="PRK00062.1"/>
    <property type="match status" value="1"/>
</dbReference>
<dbReference type="PANTHER" id="PTHR43713">
    <property type="entry name" value="GLUTAMATE-1-SEMIALDEHYDE 2,1-AMINOMUTASE"/>
    <property type="match status" value="1"/>
</dbReference>
<dbReference type="PANTHER" id="PTHR43713:SF3">
    <property type="entry name" value="GLUTAMATE-1-SEMIALDEHYDE 2,1-AMINOMUTASE 1, CHLOROPLASTIC-RELATED"/>
    <property type="match status" value="1"/>
</dbReference>
<dbReference type="Pfam" id="PF00202">
    <property type="entry name" value="Aminotran_3"/>
    <property type="match status" value="1"/>
</dbReference>
<dbReference type="SUPFAM" id="SSF53383">
    <property type="entry name" value="PLP-dependent transferases"/>
    <property type="match status" value="1"/>
</dbReference>
<dbReference type="PROSITE" id="PS00600">
    <property type="entry name" value="AA_TRANSFER_CLASS_3"/>
    <property type="match status" value="1"/>
</dbReference>
<accession>Q8NW75</accession>
<proteinExistence type="inferred from homology"/>
<gene>
    <name evidence="1" type="primary">hemL1</name>
    <name type="ordered locus">MW1611</name>
</gene>
<organism>
    <name type="scientific">Staphylococcus aureus (strain MW2)</name>
    <dbReference type="NCBI Taxonomy" id="196620"/>
    <lineage>
        <taxon>Bacteria</taxon>
        <taxon>Bacillati</taxon>
        <taxon>Bacillota</taxon>
        <taxon>Bacilli</taxon>
        <taxon>Bacillales</taxon>
        <taxon>Staphylococcaceae</taxon>
        <taxon>Staphylococcus</taxon>
    </lineage>
</organism>
<keyword id="KW-0963">Cytoplasm</keyword>
<keyword id="KW-0413">Isomerase</keyword>
<keyword id="KW-0627">Porphyrin biosynthesis</keyword>
<keyword id="KW-0663">Pyridoxal phosphate</keyword>
<sequence length="428" mass="46388">MRYTKSEEAMKVAETLMPGGVNSPVRAFKSVDTPAIFMDHGKGSKIYDIDGNEYIDYVLSWGPLILGHRDPQVISHLHEAIDKGTSFGASTLLENKLAQLVIDRVPSIEKVRMVSSGTEATLDTLRLARGYTGRNKIVKFEGCYHGHSDSLLIKAGSGVATLGLPDSPGVPEGIAKNTITVPYNDLDALKIAFEKFGDDIAGVIVEPVAGNMGVVPPIEGFLQGLRNITTEYGALLIFDEVMTGFRVGYHCAQGYFGVTPDLTCLGKVIGGGLPVGAFGGKKEIMDHIAPLGNIYQAGTLSGNPLAMTSGYETLSQLTPETYEYFNMLGDILEDGLKRVFAKHNVPITVNRAGSMIGYFLNEGPVTNFEQANKSDLKLFAEMYREMAKEGVFLPPSQFEGTFLSTAHTKEDIEKTIQAFDTALSRIVK</sequence>
<comment type="catalytic activity">
    <reaction evidence="1">
        <text>(S)-4-amino-5-oxopentanoate = 5-aminolevulinate</text>
        <dbReference type="Rhea" id="RHEA:14265"/>
        <dbReference type="ChEBI" id="CHEBI:57501"/>
        <dbReference type="ChEBI" id="CHEBI:356416"/>
        <dbReference type="EC" id="5.4.3.8"/>
    </reaction>
</comment>
<comment type="cofactor">
    <cofactor evidence="1">
        <name>pyridoxal 5'-phosphate</name>
        <dbReference type="ChEBI" id="CHEBI:597326"/>
    </cofactor>
</comment>
<comment type="pathway">
    <text evidence="1">Porphyrin-containing compound metabolism; protoporphyrin-IX biosynthesis; 5-aminolevulinate from L-glutamyl-tRNA(Glu): step 2/2.</text>
</comment>
<comment type="subunit">
    <text evidence="1">Homodimer.</text>
</comment>
<comment type="subcellular location">
    <subcellularLocation>
        <location evidence="1">Cytoplasm</location>
    </subcellularLocation>
</comment>
<comment type="similarity">
    <text evidence="1">Belongs to the class-III pyridoxal-phosphate-dependent aminotransferase family. HemL subfamily.</text>
</comment>
<evidence type="ECO:0000255" key="1">
    <source>
        <dbReference type="HAMAP-Rule" id="MF_00375"/>
    </source>
</evidence>
<name>GSA1_STAAW</name>
<feature type="chain" id="PRO_0000120452" description="Glutamate-1-semialdehyde 2,1-aminomutase 1">
    <location>
        <begin position="1"/>
        <end position="428"/>
    </location>
</feature>
<feature type="modified residue" description="N6-(pyridoxal phosphate)lysine" evidence="1">
    <location>
        <position position="267"/>
    </location>
</feature>